<dbReference type="EC" id="3.4.23.-"/>
<dbReference type="EMBL" id="L42177">
    <property type="protein sequence ID" value="AAC42094.1"/>
    <property type="molecule type" value="mRNA"/>
</dbReference>
<dbReference type="EMBL" id="AF007560">
    <property type="protein sequence ID" value="AAB72049.1"/>
    <property type="molecule type" value="Genomic_DNA"/>
</dbReference>
<dbReference type="EMBL" id="AF149111">
    <property type="protein sequence ID" value="AAF73153.1"/>
    <property type="molecule type" value="mRNA"/>
</dbReference>
<dbReference type="EMBL" id="BC014744">
    <property type="protein sequence ID" value="AAH14744.1"/>
    <property type="molecule type" value="mRNA"/>
</dbReference>
<dbReference type="EMBL" id="BC030409">
    <property type="protein sequence ID" value="AAH30409.1"/>
    <property type="molecule type" value="mRNA"/>
</dbReference>
<dbReference type="EMBL" id="BC071233">
    <property type="protein sequence ID" value="AAH71233.1"/>
    <property type="molecule type" value="mRNA"/>
</dbReference>
<dbReference type="CCDS" id="CCDS26030.1">
    <molecule id="P49769-1"/>
</dbReference>
<dbReference type="PIR" id="I78388">
    <property type="entry name" value="I78388"/>
</dbReference>
<dbReference type="RefSeq" id="NP_001349200.1">
    <molecule id="P49769-1"/>
    <property type="nucleotide sequence ID" value="NM_001362271.1"/>
</dbReference>
<dbReference type="RefSeq" id="NP_032969.1">
    <property type="nucleotide sequence ID" value="NM_008943.2"/>
</dbReference>
<dbReference type="RefSeq" id="XP_006515668.1">
    <property type="nucleotide sequence ID" value="XM_006515605.3"/>
</dbReference>
<dbReference type="SMR" id="P49769"/>
<dbReference type="BioGRID" id="202414">
    <property type="interactions" value="25"/>
</dbReference>
<dbReference type="ComplexPortal" id="CPX-4234">
    <property type="entry name" value="Gamma-secretase complex, Aph1a-Psen1 variant"/>
</dbReference>
<dbReference type="ComplexPortal" id="CPX-4235">
    <property type="entry name" value="Gamma-secretase complex, Aph1b-Psen1 variant"/>
</dbReference>
<dbReference type="CORUM" id="P49769"/>
<dbReference type="DIP" id="DIP-36237N"/>
<dbReference type="FunCoup" id="P49769">
    <property type="interactions" value="3060"/>
</dbReference>
<dbReference type="IntAct" id="P49769">
    <property type="interactions" value="27"/>
</dbReference>
<dbReference type="MINT" id="P49769"/>
<dbReference type="STRING" id="10090.ENSMUSP00000098786"/>
<dbReference type="MEROPS" id="A22.001"/>
<dbReference type="iPTMnet" id="P49769"/>
<dbReference type="PhosphoSitePlus" id="P49769"/>
<dbReference type="SwissPalm" id="P49769"/>
<dbReference type="jPOST" id="P49769"/>
<dbReference type="PaxDb" id="10090-ENSMUSP00000098786"/>
<dbReference type="PeptideAtlas" id="P49769"/>
<dbReference type="ProteomicsDB" id="301995">
    <molecule id="P49769-1"/>
</dbReference>
<dbReference type="ProteomicsDB" id="301996">
    <molecule id="P49769-2"/>
</dbReference>
<dbReference type="Pumba" id="P49769"/>
<dbReference type="Antibodypedia" id="3480">
    <property type="antibodies" value="965 antibodies from 46 providers"/>
</dbReference>
<dbReference type="Ensembl" id="ENSMUST00000041806.13">
    <molecule id="P49769-1"/>
    <property type="protein sequence ID" value="ENSMUSP00000048363.6"/>
    <property type="gene ID" value="ENSMUSG00000019969.15"/>
</dbReference>
<dbReference type="Ensembl" id="ENSMUST00000101225.2">
    <molecule id="P49769-1"/>
    <property type="protein sequence ID" value="ENSMUSP00000098786.2"/>
    <property type="gene ID" value="ENSMUSG00000019969.15"/>
</dbReference>
<dbReference type="GeneID" id="19164"/>
<dbReference type="UCSC" id="uc007odo.1">
    <molecule id="P49769-2"/>
    <property type="organism name" value="mouse"/>
</dbReference>
<dbReference type="UCSC" id="uc007odp.1">
    <molecule id="P49769-1"/>
    <property type="organism name" value="mouse"/>
</dbReference>
<dbReference type="AGR" id="MGI:1202717"/>
<dbReference type="MGI" id="MGI:1202717">
    <property type="gene designation" value="Psen1"/>
</dbReference>
<dbReference type="VEuPathDB" id="HostDB:ENSMUSG00000019969"/>
<dbReference type="eggNOG" id="KOG2736">
    <property type="taxonomic scope" value="Eukaryota"/>
</dbReference>
<dbReference type="GeneTree" id="ENSGT00940000158751"/>
<dbReference type="HOGENOM" id="CLU_022975_3_0_1"/>
<dbReference type="InParanoid" id="P49769"/>
<dbReference type="OMA" id="MYYQDID"/>
<dbReference type="OrthoDB" id="20287at2759"/>
<dbReference type="PhylomeDB" id="P49769"/>
<dbReference type="TreeFam" id="TF315040"/>
<dbReference type="Reactome" id="R-MMU-1251985">
    <property type="pathway name" value="Nuclear signaling by ERBB4"/>
</dbReference>
<dbReference type="Reactome" id="R-MMU-193692">
    <property type="pathway name" value="Regulated proteolysis of p75NTR"/>
</dbReference>
<dbReference type="Reactome" id="R-MMU-205043">
    <property type="pathway name" value="NRIF signals cell death from the nucleus"/>
</dbReference>
<dbReference type="Reactome" id="R-MMU-3928665">
    <property type="pathway name" value="EPH-ephrin mediated repulsion of cells"/>
</dbReference>
<dbReference type="Reactome" id="R-MMU-6798695">
    <property type="pathway name" value="Neutrophil degranulation"/>
</dbReference>
<dbReference type="Reactome" id="R-MMU-9013507">
    <property type="pathway name" value="NOTCH3 Activation and Transmission of Signal to the Nucleus"/>
</dbReference>
<dbReference type="Reactome" id="R-MMU-9017802">
    <property type="pathway name" value="Noncanonical activation of NOTCH3"/>
</dbReference>
<dbReference type="Reactome" id="R-MMU-9839383">
    <property type="pathway name" value="TGFBR3 PTM regulation"/>
</dbReference>
<dbReference type="BioGRID-ORCS" id="19164">
    <property type="hits" value="4 hits in 77 CRISPR screens"/>
</dbReference>
<dbReference type="ChiTaRS" id="Psen1">
    <property type="organism name" value="mouse"/>
</dbReference>
<dbReference type="PRO" id="PR:P49769"/>
<dbReference type="Proteomes" id="UP000000589">
    <property type="component" value="Chromosome 12"/>
</dbReference>
<dbReference type="RNAct" id="P49769">
    <property type="molecule type" value="protein"/>
</dbReference>
<dbReference type="Bgee" id="ENSMUSG00000019969">
    <property type="expression patterns" value="Expressed in urinary bladder urothelium and 282 other cell types or tissues"/>
</dbReference>
<dbReference type="ExpressionAtlas" id="P49769">
    <property type="expression patterns" value="baseline and differential"/>
</dbReference>
<dbReference type="GO" id="GO:0016235">
    <property type="term" value="C:aggresome"/>
    <property type="evidence" value="ECO:0000250"/>
    <property type="project" value="UniProtKB"/>
</dbReference>
<dbReference type="GO" id="GO:0030424">
    <property type="term" value="C:axon"/>
    <property type="evidence" value="ECO:0000314"/>
    <property type="project" value="MGI"/>
</dbReference>
<dbReference type="GO" id="GO:0005938">
    <property type="term" value="C:cell cortex"/>
    <property type="evidence" value="ECO:0000314"/>
    <property type="project" value="UniProtKB"/>
</dbReference>
<dbReference type="GO" id="GO:0009986">
    <property type="term" value="C:cell surface"/>
    <property type="evidence" value="ECO:0007669"/>
    <property type="project" value="Ensembl"/>
</dbReference>
<dbReference type="GO" id="GO:0005813">
    <property type="term" value="C:centrosome"/>
    <property type="evidence" value="ECO:0007669"/>
    <property type="project" value="Ensembl"/>
</dbReference>
<dbReference type="GO" id="GO:0035253">
    <property type="term" value="C:ciliary rootlet"/>
    <property type="evidence" value="ECO:0000314"/>
    <property type="project" value="MGI"/>
</dbReference>
<dbReference type="GO" id="GO:0005737">
    <property type="term" value="C:cytoplasm"/>
    <property type="evidence" value="ECO:0000314"/>
    <property type="project" value="UniProtKB"/>
</dbReference>
<dbReference type="GO" id="GO:0031410">
    <property type="term" value="C:cytoplasmic vesicle"/>
    <property type="evidence" value="ECO:0000314"/>
    <property type="project" value="MGI"/>
</dbReference>
<dbReference type="GO" id="GO:0030425">
    <property type="term" value="C:dendrite"/>
    <property type="evidence" value="ECO:0000314"/>
    <property type="project" value="MGI"/>
</dbReference>
<dbReference type="GO" id="GO:0043198">
    <property type="term" value="C:dendritic shaft"/>
    <property type="evidence" value="ECO:0000314"/>
    <property type="project" value="MGI"/>
</dbReference>
<dbReference type="GO" id="GO:0031901">
    <property type="term" value="C:early endosome membrane"/>
    <property type="evidence" value="ECO:0007669"/>
    <property type="project" value="UniProtKB-SubCell"/>
</dbReference>
<dbReference type="GO" id="GO:0005783">
    <property type="term" value="C:endoplasmic reticulum"/>
    <property type="evidence" value="ECO:0000314"/>
    <property type="project" value="MGI"/>
</dbReference>
<dbReference type="GO" id="GO:0005789">
    <property type="term" value="C:endoplasmic reticulum membrane"/>
    <property type="evidence" value="ECO:0007669"/>
    <property type="project" value="UniProtKB-SubCell"/>
</dbReference>
<dbReference type="GO" id="GO:0070765">
    <property type="term" value="C:gamma-secretase complex"/>
    <property type="evidence" value="ECO:0000314"/>
    <property type="project" value="MGI"/>
</dbReference>
<dbReference type="GO" id="GO:0098978">
    <property type="term" value="C:glutamatergic synapse"/>
    <property type="evidence" value="ECO:0000314"/>
    <property type="project" value="SynGO"/>
</dbReference>
<dbReference type="GO" id="GO:0005794">
    <property type="term" value="C:Golgi apparatus"/>
    <property type="evidence" value="ECO:0000314"/>
    <property type="project" value="MGI"/>
</dbReference>
<dbReference type="GO" id="GO:0000139">
    <property type="term" value="C:Golgi membrane"/>
    <property type="evidence" value="ECO:0007669"/>
    <property type="project" value="UniProtKB-SubCell"/>
</dbReference>
<dbReference type="GO" id="GO:0030426">
    <property type="term" value="C:growth cone"/>
    <property type="evidence" value="ECO:0000314"/>
    <property type="project" value="MGI"/>
</dbReference>
<dbReference type="GO" id="GO:0000776">
    <property type="term" value="C:kinetochore"/>
    <property type="evidence" value="ECO:0007669"/>
    <property type="project" value="Ensembl"/>
</dbReference>
<dbReference type="GO" id="GO:0005765">
    <property type="term" value="C:lysosomal membrane"/>
    <property type="evidence" value="ECO:0007669"/>
    <property type="project" value="Ensembl"/>
</dbReference>
<dbReference type="GO" id="GO:0016020">
    <property type="term" value="C:membrane"/>
    <property type="evidence" value="ECO:0000314"/>
    <property type="project" value="MGI"/>
</dbReference>
<dbReference type="GO" id="GO:0045121">
    <property type="term" value="C:membrane raft"/>
    <property type="evidence" value="ECO:0007669"/>
    <property type="project" value="Ensembl"/>
</dbReference>
<dbReference type="GO" id="GO:0005743">
    <property type="term" value="C:mitochondrial inner membrane"/>
    <property type="evidence" value="ECO:0007669"/>
    <property type="project" value="Ensembl"/>
</dbReference>
<dbReference type="GO" id="GO:0005739">
    <property type="term" value="C:mitochondrion"/>
    <property type="evidence" value="ECO:0000250"/>
    <property type="project" value="UniProtKB"/>
</dbReference>
<dbReference type="GO" id="GO:0031594">
    <property type="term" value="C:neuromuscular junction"/>
    <property type="evidence" value="ECO:0007669"/>
    <property type="project" value="Ensembl"/>
</dbReference>
<dbReference type="GO" id="GO:0043025">
    <property type="term" value="C:neuronal cell body"/>
    <property type="evidence" value="ECO:0000314"/>
    <property type="project" value="MGI"/>
</dbReference>
<dbReference type="GO" id="GO:0005640">
    <property type="term" value="C:nuclear outer membrane"/>
    <property type="evidence" value="ECO:0000266"/>
    <property type="project" value="MGI"/>
</dbReference>
<dbReference type="GO" id="GO:0005654">
    <property type="term" value="C:nucleoplasm"/>
    <property type="evidence" value="ECO:0007669"/>
    <property type="project" value="Ensembl"/>
</dbReference>
<dbReference type="GO" id="GO:0005634">
    <property type="term" value="C:nucleus"/>
    <property type="evidence" value="ECO:0000314"/>
    <property type="project" value="MGI"/>
</dbReference>
<dbReference type="GO" id="GO:0005886">
    <property type="term" value="C:plasma membrane"/>
    <property type="evidence" value="ECO:0000314"/>
    <property type="project" value="UniProtKB"/>
</dbReference>
<dbReference type="GO" id="GO:0098794">
    <property type="term" value="C:postsynapse"/>
    <property type="evidence" value="ECO:0007669"/>
    <property type="project" value="GOC"/>
</dbReference>
<dbReference type="GO" id="GO:0042734">
    <property type="term" value="C:presynaptic membrane"/>
    <property type="evidence" value="ECO:0007669"/>
    <property type="project" value="Ensembl"/>
</dbReference>
<dbReference type="GO" id="GO:0005791">
    <property type="term" value="C:rough endoplasmic reticulum"/>
    <property type="evidence" value="ECO:0007669"/>
    <property type="project" value="Ensembl"/>
</dbReference>
<dbReference type="GO" id="GO:0042383">
    <property type="term" value="C:sarcolemma"/>
    <property type="evidence" value="ECO:0007669"/>
    <property type="project" value="Ensembl"/>
</dbReference>
<dbReference type="GO" id="GO:0005790">
    <property type="term" value="C:smooth endoplasmic reticulum"/>
    <property type="evidence" value="ECO:0007669"/>
    <property type="project" value="Ensembl"/>
</dbReference>
<dbReference type="GO" id="GO:0008021">
    <property type="term" value="C:synaptic vesicle"/>
    <property type="evidence" value="ECO:0007669"/>
    <property type="project" value="Ensembl"/>
</dbReference>
<dbReference type="GO" id="GO:0042500">
    <property type="term" value="F:aspartic endopeptidase activity, intramembrane cleaving"/>
    <property type="evidence" value="ECO:0000316"/>
    <property type="project" value="MGI"/>
</dbReference>
<dbReference type="GO" id="GO:0004190">
    <property type="term" value="F:aspartic-type endopeptidase activity"/>
    <property type="evidence" value="ECO:0000315"/>
    <property type="project" value="MGI"/>
</dbReference>
<dbReference type="GO" id="GO:0051117">
    <property type="term" value="F:ATPase binding"/>
    <property type="evidence" value="ECO:0007669"/>
    <property type="project" value="Ensembl"/>
</dbReference>
<dbReference type="GO" id="GO:0008013">
    <property type="term" value="F:beta-catenin binding"/>
    <property type="evidence" value="ECO:0000266"/>
    <property type="project" value="MGI"/>
</dbReference>
<dbReference type="GO" id="GO:0045296">
    <property type="term" value="F:cadherin binding"/>
    <property type="evidence" value="ECO:0000353"/>
    <property type="project" value="MGI"/>
</dbReference>
<dbReference type="GO" id="GO:0005262">
    <property type="term" value="F:calcium channel activity"/>
    <property type="evidence" value="ECO:0007669"/>
    <property type="project" value="Ensembl"/>
</dbReference>
<dbReference type="GO" id="GO:0004175">
    <property type="term" value="F:endopeptidase activity"/>
    <property type="evidence" value="ECO:0000315"/>
    <property type="project" value="MGI"/>
</dbReference>
<dbReference type="GO" id="GO:0070851">
    <property type="term" value="F:growth factor receptor binding"/>
    <property type="evidence" value="ECO:0007669"/>
    <property type="project" value="Ensembl"/>
</dbReference>
<dbReference type="GO" id="GO:0030165">
    <property type="term" value="F:PDZ domain binding"/>
    <property type="evidence" value="ECO:0007669"/>
    <property type="project" value="Ensembl"/>
</dbReference>
<dbReference type="GO" id="GO:0042987">
    <property type="term" value="P:amyloid precursor protein catabolic process"/>
    <property type="evidence" value="ECO:0000315"/>
    <property type="project" value="MGI"/>
</dbReference>
<dbReference type="GO" id="GO:0042982">
    <property type="term" value="P:amyloid precursor protein metabolic process"/>
    <property type="evidence" value="ECO:0000250"/>
    <property type="project" value="UniProtKB"/>
</dbReference>
<dbReference type="GO" id="GO:0034205">
    <property type="term" value="P:amyloid-beta formation"/>
    <property type="evidence" value="ECO:0000315"/>
    <property type="project" value="MGI"/>
</dbReference>
<dbReference type="GO" id="GO:0050435">
    <property type="term" value="P:amyloid-beta metabolic process"/>
    <property type="evidence" value="ECO:0000315"/>
    <property type="project" value="MGI"/>
</dbReference>
<dbReference type="GO" id="GO:0097190">
    <property type="term" value="P:apoptotic signaling pathway"/>
    <property type="evidence" value="ECO:0000316"/>
    <property type="project" value="MGI"/>
</dbReference>
<dbReference type="GO" id="GO:0002265">
    <property type="term" value="P:astrocyte activation involved in immune response"/>
    <property type="evidence" value="ECO:0007669"/>
    <property type="project" value="Ensembl"/>
</dbReference>
<dbReference type="GO" id="GO:0000045">
    <property type="term" value="P:autophagosome assembly"/>
    <property type="evidence" value="ECO:0000315"/>
    <property type="project" value="MGI"/>
</dbReference>
<dbReference type="GO" id="GO:0006914">
    <property type="term" value="P:autophagy"/>
    <property type="evidence" value="ECO:0000315"/>
    <property type="project" value="MGI"/>
</dbReference>
<dbReference type="GO" id="GO:0001568">
    <property type="term" value="P:blood vessel development"/>
    <property type="evidence" value="ECO:0000315"/>
    <property type="project" value="MGI"/>
</dbReference>
<dbReference type="GO" id="GO:0007420">
    <property type="term" value="P:brain development"/>
    <property type="evidence" value="ECO:0000315"/>
    <property type="project" value="MGI"/>
</dbReference>
<dbReference type="GO" id="GO:0048854">
    <property type="term" value="P:brain morphogenesis"/>
    <property type="evidence" value="ECO:0000316"/>
    <property type="project" value="MGI"/>
</dbReference>
<dbReference type="GO" id="GO:0021870">
    <property type="term" value="P:Cajal-Retzius cell differentiation"/>
    <property type="evidence" value="ECO:0000315"/>
    <property type="project" value="MGI"/>
</dbReference>
<dbReference type="GO" id="GO:0001708">
    <property type="term" value="P:cell fate specification"/>
    <property type="evidence" value="ECO:0000316"/>
    <property type="project" value="MGI"/>
</dbReference>
<dbReference type="GO" id="GO:0098609">
    <property type="term" value="P:cell-cell adhesion"/>
    <property type="evidence" value="ECO:0000266"/>
    <property type="project" value="MGI"/>
</dbReference>
<dbReference type="GO" id="GO:1904646">
    <property type="term" value="P:cellular response to amyloid-beta"/>
    <property type="evidence" value="ECO:0007669"/>
    <property type="project" value="Ensembl"/>
</dbReference>
<dbReference type="GO" id="GO:0021549">
    <property type="term" value="P:cerebellum development"/>
    <property type="evidence" value="ECO:0007669"/>
    <property type="project" value="Ensembl"/>
</dbReference>
<dbReference type="GO" id="GO:0021795">
    <property type="term" value="P:cerebral cortex cell migration"/>
    <property type="evidence" value="ECO:0000315"/>
    <property type="project" value="MGI"/>
</dbReference>
<dbReference type="GO" id="GO:0021987">
    <property type="term" value="P:cerebral cortex development"/>
    <property type="evidence" value="ECO:0000315"/>
    <property type="project" value="MGI"/>
</dbReference>
<dbReference type="GO" id="GO:0015871">
    <property type="term" value="P:choline transport"/>
    <property type="evidence" value="ECO:0000315"/>
    <property type="project" value="MGI"/>
</dbReference>
<dbReference type="GO" id="GO:0006974">
    <property type="term" value="P:DNA damage response"/>
    <property type="evidence" value="ECO:0000315"/>
    <property type="project" value="MGI"/>
</dbReference>
<dbReference type="GO" id="GO:0021904">
    <property type="term" value="P:dorsal/ventral neural tube patterning"/>
    <property type="evidence" value="ECO:0000316"/>
    <property type="project" value="MGI"/>
</dbReference>
<dbReference type="GO" id="GO:0030326">
    <property type="term" value="P:embryonic limb morphogenesis"/>
    <property type="evidence" value="ECO:0000316"/>
    <property type="project" value="MGI"/>
</dbReference>
<dbReference type="GO" id="GO:0032469">
    <property type="term" value="P:endoplasmic reticulum calcium ion homeostasis"/>
    <property type="evidence" value="ECO:0000315"/>
    <property type="project" value="MGI"/>
</dbReference>
<dbReference type="GO" id="GO:0050673">
    <property type="term" value="P:epithelial cell proliferation"/>
    <property type="evidence" value="ECO:0000316"/>
    <property type="project" value="MGI"/>
</dbReference>
<dbReference type="GO" id="GO:0030900">
    <property type="term" value="P:forebrain development"/>
    <property type="evidence" value="ECO:0000316"/>
    <property type="project" value="MGI"/>
</dbReference>
<dbReference type="GO" id="GO:0010467">
    <property type="term" value="P:gene expression"/>
    <property type="evidence" value="ECO:0000315"/>
    <property type="project" value="MGI"/>
</dbReference>
<dbReference type="GO" id="GO:0007507">
    <property type="term" value="P:heart development"/>
    <property type="evidence" value="ECO:0000315"/>
    <property type="project" value="MGI"/>
</dbReference>
<dbReference type="GO" id="GO:0001947">
    <property type="term" value="P:heart looping"/>
    <property type="evidence" value="ECO:0000316"/>
    <property type="project" value="MGI"/>
</dbReference>
<dbReference type="GO" id="GO:0002244">
    <property type="term" value="P:hematopoietic progenitor cell differentiation"/>
    <property type="evidence" value="ECO:0000316"/>
    <property type="project" value="MGI"/>
</dbReference>
<dbReference type="GO" id="GO:0006874">
    <property type="term" value="P:intracellular calcium ion homeostasis"/>
    <property type="evidence" value="ECO:0000315"/>
    <property type="project" value="MGI"/>
</dbReference>
<dbReference type="GO" id="GO:0035556">
    <property type="term" value="P:intracellular signal transduction"/>
    <property type="evidence" value="ECO:0007669"/>
    <property type="project" value="InterPro"/>
</dbReference>
<dbReference type="GO" id="GO:0098712">
    <property type="term" value="P:L-glutamate import across plasma membrane"/>
    <property type="evidence" value="ECO:0000315"/>
    <property type="project" value="MGI"/>
</dbReference>
<dbReference type="GO" id="GO:0007611">
    <property type="term" value="P:learning or memory"/>
    <property type="evidence" value="ECO:0000316"/>
    <property type="project" value="MGI"/>
</dbReference>
<dbReference type="GO" id="GO:0040011">
    <property type="term" value="P:locomotion"/>
    <property type="evidence" value="ECO:0000316"/>
    <property type="project" value="MGI"/>
</dbReference>
<dbReference type="GO" id="GO:0060291">
    <property type="term" value="P:long-term synaptic potentiation"/>
    <property type="evidence" value="ECO:0000304"/>
    <property type="project" value="ARUK-UCL"/>
</dbReference>
<dbReference type="GO" id="GO:0006509">
    <property type="term" value="P:membrane protein ectodomain proteolysis"/>
    <property type="evidence" value="ECO:0000250"/>
    <property type="project" value="UniProtKB"/>
</dbReference>
<dbReference type="GO" id="GO:0007613">
    <property type="term" value="P:memory"/>
    <property type="evidence" value="ECO:0000315"/>
    <property type="project" value="MGI"/>
</dbReference>
<dbReference type="GO" id="GO:0006839">
    <property type="term" value="P:mitochondrial transport"/>
    <property type="evidence" value="ECO:0000315"/>
    <property type="project" value="MGI"/>
</dbReference>
<dbReference type="GO" id="GO:0043011">
    <property type="term" value="P:myeloid dendritic cell differentiation"/>
    <property type="evidence" value="ECO:0000315"/>
    <property type="project" value="MGI"/>
</dbReference>
<dbReference type="GO" id="GO:0002573">
    <property type="term" value="P:myeloid leukocyte differentiation"/>
    <property type="evidence" value="ECO:0000316"/>
    <property type="project" value="MGI"/>
</dbReference>
<dbReference type="GO" id="GO:0043066">
    <property type="term" value="P:negative regulation of apoptotic process"/>
    <property type="evidence" value="ECO:0000314"/>
    <property type="project" value="MGI"/>
</dbReference>
<dbReference type="GO" id="GO:2001234">
    <property type="term" value="P:negative regulation of apoptotic signaling pathway"/>
    <property type="evidence" value="ECO:0000316"/>
    <property type="project" value="MGI"/>
</dbReference>
<dbReference type="GO" id="GO:0050771">
    <property type="term" value="P:negative regulation of axonogenesis"/>
    <property type="evidence" value="ECO:0000315"/>
    <property type="project" value="MGI"/>
</dbReference>
<dbReference type="GO" id="GO:0042059">
    <property type="term" value="P:negative regulation of epidermal growth factor receptor signaling pathway"/>
    <property type="evidence" value="ECO:0000315"/>
    <property type="project" value="BHF-UCL"/>
</dbReference>
<dbReference type="GO" id="GO:0010629">
    <property type="term" value="P:negative regulation of gene expression"/>
    <property type="evidence" value="ECO:0007669"/>
    <property type="project" value="Ensembl"/>
</dbReference>
<dbReference type="GO" id="GO:0043524">
    <property type="term" value="P:negative regulation of neuron apoptotic process"/>
    <property type="evidence" value="ECO:0007669"/>
    <property type="project" value="Ensembl"/>
</dbReference>
<dbReference type="GO" id="GO:0000122">
    <property type="term" value="P:negative regulation of transcription by RNA polymerase II"/>
    <property type="evidence" value="ECO:0000315"/>
    <property type="project" value="BHF-UCL"/>
</dbReference>
<dbReference type="GO" id="GO:2000059">
    <property type="term" value="P:negative regulation of ubiquitin-dependent protein catabolic process"/>
    <property type="evidence" value="ECO:0000315"/>
    <property type="project" value="BHF-UCL"/>
</dbReference>
<dbReference type="GO" id="GO:0003407">
    <property type="term" value="P:neural retina development"/>
    <property type="evidence" value="ECO:0007669"/>
    <property type="project" value="Ensembl"/>
</dbReference>
<dbReference type="GO" id="GO:0022008">
    <property type="term" value="P:neurogenesis"/>
    <property type="evidence" value="ECO:0000315"/>
    <property type="project" value="MGI"/>
</dbReference>
<dbReference type="GO" id="GO:0051402">
    <property type="term" value="P:neuron apoptotic process"/>
    <property type="evidence" value="ECO:0000316"/>
    <property type="project" value="MGI"/>
</dbReference>
<dbReference type="GO" id="GO:0070050">
    <property type="term" value="P:neuron cellular homeostasis"/>
    <property type="evidence" value="ECO:0000315"/>
    <property type="project" value="MGI"/>
</dbReference>
<dbReference type="GO" id="GO:0048666">
    <property type="term" value="P:neuron development"/>
    <property type="evidence" value="ECO:0000315"/>
    <property type="project" value="CACAO"/>
</dbReference>
<dbReference type="GO" id="GO:0030182">
    <property type="term" value="P:neuron differentiation"/>
    <property type="evidence" value="ECO:0000315"/>
    <property type="project" value="MGI"/>
</dbReference>
<dbReference type="GO" id="GO:0001764">
    <property type="term" value="P:neuron migration"/>
    <property type="evidence" value="ECO:0000315"/>
    <property type="project" value="MGI"/>
</dbReference>
<dbReference type="GO" id="GO:1990535">
    <property type="term" value="P:neuron projection maintenance"/>
    <property type="evidence" value="ECO:0007669"/>
    <property type="project" value="Ensembl"/>
</dbReference>
<dbReference type="GO" id="GO:0007220">
    <property type="term" value="P:Notch receptor processing"/>
    <property type="evidence" value="ECO:0000315"/>
    <property type="project" value="MGI"/>
</dbReference>
<dbReference type="GO" id="GO:0007219">
    <property type="term" value="P:Notch signaling pathway"/>
    <property type="evidence" value="ECO:0000315"/>
    <property type="project" value="MGI"/>
</dbReference>
<dbReference type="GO" id="GO:1905908">
    <property type="term" value="P:positive regulation of amyloid fibril formation"/>
    <property type="evidence" value="ECO:0007669"/>
    <property type="project" value="Ensembl"/>
</dbReference>
<dbReference type="GO" id="GO:0043065">
    <property type="term" value="P:positive regulation of apoptotic process"/>
    <property type="evidence" value="ECO:0000316"/>
    <property type="project" value="MGI"/>
</dbReference>
<dbReference type="GO" id="GO:0050820">
    <property type="term" value="P:positive regulation of coagulation"/>
    <property type="evidence" value="ECO:0000315"/>
    <property type="project" value="MGI"/>
</dbReference>
<dbReference type="GO" id="GO:0060999">
    <property type="term" value="P:positive regulation of dendritic spine development"/>
    <property type="evidence" value="ECO:0007669"/>
    <property type="project" value="Ensembl"/>
</dbReference>
<dbReference type="GO" id="GO:0045893">
    <property type="term" value="P:positive regulation of DNA-templated transcription"/>
    <property type="evidence" value="ECO:0007669"/>
    <property type="project" value="Ensembl"/>
</dbReference>
<dbReference type="GO" id="GO:0045821">
    <property type="term" value="P:positive regulation of glycolytic process"/>
    <property type="evidence" value="ECO:0007669"/>
    <property type="project" value="Ensembl"/>
</dbReference>
<dbReference type="GO" id="GO:0002038">
    <property type="term" value="P:positive regulation of L-glutamate import across plasma membrane"/>
    <property type="evidence" value="ECO:0000315"/>
    <property type="project" value="MGI"/>
</dbReference>
<dbReference type="GO" id="GO:0032436">
    <property type="term" value="P:positive regulation of proteasomal ubiquitin-dependent protein catabolic process"/>
    <property type="evidence" value="ECO:0000315"/>
    <property type="project" value="BHF-UCL"/>
</dbReference>
<dbReference type="GO" id="GO:0042307">
    <property type="term" value="P:positive regulation of protein import into nucleus"/>
    <property type="evidence" value="ECO:0007669"/>
    <property type="project" value="Ensembl"/>
</dbReference>
<dbReference type="GO" id="GO:0001921">
    <property type="term" value="P:positive regulation of receptor recycling"/>
    <property type="evidence" value="ECO:0000315"/>
    <property type="project" value="BHF-UCL"/>
</dbReference>
<dbReference type="GO" id="GO:0032760">
    <property type="term" value="P:positive regulation of tumor necrosis factor production"/>
    <property type="evidence" value="ECO:0007669"/>
    <property type="project" value="Ensembl"/>
</dbReference>
<dbReference type="GO" id="GO:0009791">
    <property type="term" value="P:post-embryonic development"/>
    <property type="evidence" value="ECO:0000315"/>
    <property type="project" value="MGI"/>
</dbReference>
<dbReference type="GO" id="GO:0140249">
    <property type="term" value="P:protein catabolic process at postsynapse"/>
    <property type="evidence" value="ECO:0000314"/>
    <property type="project" value="SynGO"/>
</dbReference>
<dbReference type="GO" id="GO:0006486">
    <property type="term" value="P:protein glycosylation"/>
    <property type="evidence" value="ECO:0000315"/>
    <property type="project" value="MGI"/>
</dbReference>
<dbReference type="GO" id="GO:0051604">
    <property type="term" value="P:protein maturation"/>
    <property type="evidence" value="ECO:0000316"/>
    <property type="project" value="MGI"/>
</dbReference>
<dbReference type="GO" id="GO:0016485">
    <property type="term" value="P:protein processing"/>
    <property type="evidence" value="ECO:0000315"/>
    <property type="project" value="MGI"/>
</dbReference>
<dbReference type="GO" id="GO:0015031">
    <property type="term" value="P:protein transport"/>
    <property type="evidence" value="ECO:0000316"/>
    <property type="project" value="MGI"/>
</dbReference>
<dbReference type="GO" id="GO:0060828">
    <property type="term" value="P:regulation of canonical Wnt signaling pathway"/>
    <property type="evidence" value="ECO:0000315"/>
    <property type="project" value="UniProtKB"/>
</dbReference>
<dbReference type="GO" id="GO:0010975">
    <property type="term" value="P:regulation of neuron projection development"/>
    <property type="evidence" value="ECO:0000250"/>
    <property type="project" value="UniProtKB"/>
</dbReference>
<dbReference type="GO" id="GO:0099175">
    <property type="term" value="P:regulation of postsynapse organization"/>
    <property type="evidence" value="ECO:0000314"/>
    <property type="project" value="SynGO"/>
</dbReference>
<dbReference type="GO" id="GO:0060075">
    <property type="term" value="P:regulation of resting membrane potential"/>
    <property type="evidence" value="ECO:0000315"/>
    <property type="project" value="MGI"/>
</dbReference>
<dbReference type="GO" id="GO:0048167">
    <property type="term" value="P:regulation of synaptic plasticity"/>
    <property type="evidence" value="ECO:0000315"/>
    <property type="project" value="MGI"/>
</dbReference>
<dbReference type="GO" id="GO:0051966">
    <property type="term" value="P:regulation of synaptic transmission, glutamatergic"/>
    <property type="evidence" value="ECO:0000315"/>
    <property type="project" value="MGI"/>
</dbReference>
<dbReference type="GO" id="GO:0098693">
    <property type="term" value="P:regulation of synaptic vesicle cycle"/>
    <property type="evidence" value="ECO:0000314"/>
    <property type="project" value="SynGO"/>
</dbReference>
<dbReference type="GO" id="GO:0006979">
    <property type="term" value="P:response to oxidative stress"/>
    <property type="evidence" value="ECO:0000315"/>
    <property type="project" value="MGI"/>
</dbReference>
<dbReference type="GO" id="GO:0035282">
    <property type="term" value="P:segmentation"/>
    <property type="evidence" value="ECO:0000315"/>
    <property type="project" value="MGI"/>
</dbReference>
<dbReference type="GO" id="GO:0051208">
    <property type="term" value="P:sequestering of calcium ion"/>
    <property type="evidence" value="ECO:0000315"/>
    <property type="project" value="MGI"/>
</dbReference>
<dbReference type="GO" id="GO:0048705">
    <property type="term" value="P:skeletal system morphogenesis"/>
    <property type="evidence" value="ECO:0000315"/>
    <property type="project" value="MGI"/>
</dbReference>
<dbReference type="GO" id="GO:0043589">
    <property type="term" value="P:skin morphogenesis"/>
    <property type="evidence" value="ECO:0000315"/>
    <property type="project" value="BHF-UCL"/>
</dbReference>
<dbReference type="GO" id="GO:0051563">
    <property type="term" value="P:smooth endoplasmic reticulum calcium ion homeostasis"/>
    <property type="evidence" value="ECO:0000316"/>
    <property type="project" value="MGI"/>
</dbReference>
<dbReference type="GO" id="GO:0001756">
    <property type="term" value="P:somitogenesis"/>
    <property type="evidence" value="ECO:0000315"/>
    <property type="project" value="MGI"/>
</dbReference>
<dbReference type="GO" id="GO:0050808">
    <property type="term" value="P:synapse organization"/>
    <property type="evidence" value="ECO:0007669"/>
    <property type="project" value="Ensembl"/>
</dbReference>
<dbReference type="GO" id="GO:0016080">
    <property type="term" value="P:synaptic vesicle targeting"/>
    <property type="evidence" value="ECO:0000315"/>
    <property type="project" value="MGI"/>
</dbReference>
<dbReference type="GO" id="GO:0002286">
    <property type="term" value="P:T cell activation involved in immune response"/>
    <property type="evidence" value="ECO:0000316"/>
    <property type="project" value="MGI"/>
</dbReference>
<dbReference type="GO" id="GO:0050852">
    <property type="term" value="P:T cell receptor signaling pathway"/>
    <property type="evidence" value="ECO:0000316"/>
    <property type="project" value="MGI"/>
</dbReference>
<dbReference type="GO" id="GO:0048538">
    <property type="term" value="P:thymus development"/>
    <property type="evidence" value="ECO:0000315"/>
    <property type="project" value="MGI"/>
</dbReference>
<dbReference type="FunFam" id="1.10.472.100:FF:000001">
    <property type="entry name" value="Presenilin"/>
    <property type="match status" value="1"/>
</dbReference>
<dbReference type="Gene3D" id="1.10.472.100">
    <property type="entry name" value="Presenilin"/>
    <property type="match status" value="1"/>
</dbReference>
<dbReference type="InterPro" id="IPR002031">
    <property type="entry name" value="Pept_A22A_PS1"/>
</dbReference>
<dbReference type="InterPro" id="IPR001108">
    <property type="entry name" value="Peptidase_A22A"/>
</dbReference>
<dbReference type="InterPro" id="IPR006639">
    <property type="entry name" value="Preselin/SPP"/>
</dbReference>
<dbReference type="InterPro" id="IPR042524">
    <property type="entry name" value="Presenilin_C"/>
</dbReference>
<dbReference type="PANTHER" id="PTHR10202">
    <property type="entry name" value="PRESENILIN"/>
    <property type="match status" value="1"/>
</dbReference>
<dbReference type="PANTHER" id="PTHR10202:SF18">
    <property type="entry name" value="PRESENILIN-1"/>
    <property type="match status" value="1"/>
</dbReference>
<dbReference type="Pfam" id="PF01080">
    <property type="entry name" value="Presenilin"/>
    <property type="match status" value="1"/>
</dbReference>
<dbReference type="PRINTS" id="PR01072">
    <property type="entry name" value="PRESENILIN"/>
</dbReference>
<dbReference type="PRINTS" id="PR01073">
    <property type="entry name" value="PRESENILIN1"/>
</dbReference>
<dbReference type="SMART" id="SM00730">
    <property type="entry name" value="PSN"/>
    <property type="match status" value="1"/>
</dbReference>
<protein>
    <recommendedName>
        <fullName>Presenilin-1</fullName>
        <shortName>PS-1</shortName>
        <ecNumber>3.4.23.-</ecNumber>
    </recommendedName>
    <alternativeName>
        <fullName>Protein S182</fullName>
    </alternativeName>
    <component>
        <recommendedName>
            <fullName>Presenilin-1 NTF subunit</fullName>
        </recommendedName>
    </component>
    <component>
        <recommendedName>
            <fullName>Presenilin-1 CTF subunit</fullName>
        </recommendedName>
    </component>
    <component>
        <recommendedName>
            <fullName>Presenilin-1 CTF12</fullName>
            <shortName>PS1-CTF12</shortName>
        </recommendedName>
    </component>
</protein>
<gene>
    <name type="primary">Psen1</name>
    <name type="synonym">Ad3h</name>
    <name type="synonym">Psnl1</name>
</gene>
<reference key="1">
    <citation type="journal article" date="1995" name="Nature">
        <title>Cloning of a gene bearing missense mutations in early-onset familial Alzheimer's disease.</title>
        <authorList>
            <person name="Sherrington R."/>
            <person name="Rogaev E.I."/>
            <person name="Liang Y."/>
            <person name="Rogaeva E.A."/>
            <person name="Levesque G."/>
            <person name="Ikeda M."/>
            <person name="Chi H."/>
            <person name="Lin C."/>
            <person name="Li G."/>
            <person name="Holman K."/>
            <person name="Tsuda T."/>
            <person name="Mar L."/>
            <person name="Foncin J.-F."/>
            <person name="Bruni A.C."/>
            <person name="Montesi M.P."/>
            <person name="Sorbi S."/>
            <person name="Rainero I."/>
            <person name="Pinessi L."/>
            <person name="Nee L."/>
            <person name="Chumakov I."/>
            <person name="Pollen D."/>
            <person name="Brookes A."/>
            <person name="Sanseau P."/>
            <person name="Polinsky R.J."/>
            <person name="Wasco W."/>
            <person name="da Silva H.A.R."/>
            <person name="Haines J.L."/>
            <person name="Pericak-Vance M.A."/>
            <person name="Tanzi R.E."/>
            <person name="Roses A.D."/>
            <person name="Fraser P.E."/>
            <person name="Rommens J.M."/>
            <person name="St George-Hyslop P.H."/>
        </authorList>
    </citation>
    <scope>NUCLEOTIDE SEQUENCE [MRNA] (ISOFORM 1)</scope>
    <source>
        <tissue>Brain</tissue>
    </source>
</reference>
<reference key="2">
    <citation type="journal article" date="1997" name="J. Biol. Chem.">
        <title>Transcriptional regulation of the mouse presenilin-1 gene.</title>
        <authorList>
            <person name="Mitsuda N."/>
            <person name="Roses A.D."/>
            <person name="Vitek M.P."/>
        </authorList>
    </citation>
    <scope>NUCLEOTIDE SEQUENCE [GENOMIC DNA] (ISOFORM 1)</scope>
    <source>
        <strain>129/SvJ</strain>
    </source>
</reference>
<reference key="3">
    <citation type="submission" date="1999-05" db="EMBL/GenBank/DDBJ databases">
        <title>Molecular cloning and tissue distribution of presenilin-1 in senenscence accelerated mice (SAM P8) mice.</title>
        <authorList>
            <person name="Kumar V.B."/>
            <person name="Vyas K.C."/>
            <person name="Choudhary V."/>
            <person name="Franko M."/>
            <person name="Flood J.F."/>
            <person name="Morley J.E."/>
        </authorList>
    </citation>
    <scope>NUCLEOTIDE SEQUENCE [MRNA] (ISOFORM 1)</scope>
    <source>
        <strain>SAM P8</strain>
        <tissue>Hippocampus</tissue>
    </source>
</reference>
<reference key="4">
    <citation type="journal article" date="2004" name="Genome Res.">
        <title>The status, quality, and expansion of the NIH full-length cDNA project: the Mammalian Gene Collection (MGC).</title>
        <authorList>
            <consortium name="The MGC Project Team"/>
        </authorList>
    </citation>
    <scope>NUCLEOTIDE SEQUENCE [LARGE SCALE MRNA] (ISOFORMS 1 AND 2)</scope>
    <source>
        <strain>FVB/N</strain>
        <tissue>Eye</tissue>
        <tissue>Liver</tissue>
        <tissue>Mammary gland</tissue>
        <tissue>Retina</tissue>
    </source>
</reference>
<reference key="5">
    <citation type="journal article" date="1997" name="Cell">
        <title>Skeletal and CNS defects in Presenilin-1-deficient mice.</title>
        <authorList>
            <person name="Shen J."/>
            <person name="Bronson R.T."/>
            <person name="Chen D.F."/>
            <person name="Xia W."/>
            <person name="Selkoe D.J."/>
            <person name="Tonegawa S."/>
        </authorList>
    </citation>
    <scope>DISRUPTION PHENOTYPE</scope>
    <scope>FUNCTION</scope>
</reference>
<reference key="6">
    <citation type="journal article" date="1999" name="Curr. Biol.">
        <title>Presenilin-1 deficiency leads to loss of Cajal-Retzius neurons and cortical dysplasia similar to human type 2 lissencephaly.</title>
        <authorList>
            <person name="Hartmann D."/>
            <person name="De Strooper B."/>
            <person name="Saftig P."/>
        </authorList>
    </citation>
    <scope>DISRUPTION PHENOTYPE</scope>
    <scope>FUNCTION</scope>
    <scope>SUBCELLULAR LOCATION</scope>
    <scope>TISSUE SPECIFICITY</scope>
</reference>
<reference key="7">
    <citation type="journal article" date="2000" name="J. Neurochem.">
        <title>Isolation and characterization of novel presenilin binding protein.</title>
        <authorList>
            <person name="Kashiwa A."/>
            <person name="Yoshida H."/>
            <person name="Lee S."/>
            <person name="Paladino T."/>
            <person name="Liu Y."/>
            <person name="Chen Q."/>
            <person name="Dargusch R."/>
            <person name="Schubert D."/>
            <person name="Kimura H."/>
        </authorList>
    </citation>
    <scope>INTERACTION WITH DOCK3</scope>
    <source>
        <tissue>Brain</tissue>
    </source>
</reference>
<reference key="8">
    <citation type="journal article" date="2001" name="Proc. Natl. Acad. Sci. U.S.A.">
        <title>Presenilin-1 binds cytoplasmic epithelial cadherin, inhibits cadherin/p120 association, and regulates stability and function of the cadherin/catenin adhesion complex.</title>
        <authorList>
            <person name="Baki L."/>
            <person name="Marambaud P."/>
            <person name="Efthimiopoulos S."/>
            <person name="Georgakopoulos A."/>
            <person name="Wen P."/>
            <person name="Cui W."/>
            <person name="Shioi J."/>
            <person name="Koo E."/>
            <person name="Ozawa M."/>
            <person name="Friedrich V.L."/>
            <person name="Robakis N.K."/>
        </authorList>
    </citation>
    <scope>FUNCTION</scope>
    <scope>IDENTIFICATION IN COMPLEX WITH CDH1; CTNNB1; CTNND1 AND JUP</scope>
</reference>
<reference key="9">
    <citation type="journal article" date="2001" name="Proc. Natl. Acad. Sci. U.S.A.">
        <title>Loss of presenilin 1 is associated with enhanced beta-catenin signaling and skin tumorigenesis.</title>
        <authorList>
            <person name="Xia X."/>
            <person name="Qian S."/>
            <person name="Soriano S."/>
            <person name="Wu Y."/>
            <person name="Fletcher A.M."/>
            <person name="Wang X.J."/>
            <person name="Koo E.H."/>
            <person name="Wu X."/>
            <person name="Zheng H."/>
        </authorList>
    </citation>
    <scope>DISRUPTION PHENOTYPE</scope>
    <scope>FUNCTION</scope>
    <scope>TISSUE SPECIFICITY</scope>
    <scope>SUBCELLULAR LOCATION</scope>
</reference>
<reference key="10">
    <citation type="journal article" date="2002" name="EMBO J.">
        <title>A presenilin-1/gamma-secretase cleavage releases the E-cadherin intracellular domain and regulates disassembly of adherens junctions.</title>
        <authorList>
            <person name="Marambaud P."/>
            <person name="Shioi J."/>
            <person name="Serban G."/>
            <person name="Georgakopoulos A."/>
            <person name="Sarner S."/>
            <person name="Nagy V."/>
            <person name="Baki L."/>
            <person name="Wen P."/>
            <person name="Efthimiopoulos S."/>
            <person name="Shao Z."/>
            <person name="Wisniewski T."/>
            <person name="Robakis N.K."/>
        </authorList>
    </citation>
    <scope>FUNCTION</scope>
</reference>
<reference key="11">
    <citation type="journal article" date="2003" name="Mech. Dev.">
        <title>Abnormal blood vessel development in mice lacking presenilin-1.</title>
        <authorList>
            <person name="Nakajima M."/>
            <person name="Yuasa S."/>
            <person name="Ueno M."/>
            <person name="Takakura N."/>
            <person name="Koseki H."/>
            <person name="Shirasawa T."/>
        </authorList>
    </citation>
    <scope>DISRUPTION PHENOTYPE</scope>
    <scope>FUNCTION</scope>
</reference>
<reference key="12">
    <citation type="journal article" date="2004" name="Mol. Cell. Proteomics">
        <title>Phosphoproteomic analysis of the developing mouse brain.</title>
        <authorList>
            <person name="Ballif B.A."/>
            <person name="Villen J."/>
            <person name="Beausoleil S.A."/>
            <person name="Schwartz D."/>
            <person name="Gygi S.P."/>
        </authorList>
    </citation>
    <scope>IDENTIFICATION BY MASS SPECTROMETRY [LARGE SCALE ANALYSIS]</scope>
    <source>
        <tissue>Embryonic brain</tissue>
    </source>
</reference>
<reference key="13">
    <citation type="journal article" date="2006" name="Cell">
        <title>Presenilins form ER Ca2+ leak channels, a function disrupted by familial Alzheimer's disease-linked mutations.</title>
        <authorList>
            <person name="Tu H."/>
            <person name="Nelson O."/>
            <person name="Bezprozvanny A."/>
            <person name="Wang Z."/>
            <person name="Lee S.F."/>
            <person name="Hao Y.H."/>
            <person name="Serneels L."/>
            <person name="De Strooper B."/>
            <person name="Yu G."/>
            <person name="Bezprozvanny I."/>
        </authorList>
    </citation>
    <scope>FUNCTION</scope>
</reference>
<reference key="14">
    <citation type="journal article" date="2007" name="J. Biol. Chem.">
        <title>Ligand binding and calcium influx induce distinct ectodomain/gamma-secretase-processing pathways of EphB2 receptor.</title>
        <authorList>
            <person name="Litterst C."/>
            <person name="Georgakopoulos A."/>
            <person name="Shioi J."/>
            <person name="Ghersi E."/>
            <person name="Wisniewski T."/>
            <person name="Wang R."/>
            <person name="Ludwig A."/>
            <person name="Robakis N.K."/>
        </authorList>
    </citation>
    <scope>FUNCTION</scope>
</reference>
<reference key="15">
    <citation type="journal article" date="2007" name="Proc. Natl. Acad. Sci. U.S.A.">
        <title>Large-scale phosphorylation analysis of mouse liver.</title>
        <authorList>
            <person name="Villen J."/>
            <person name="Beausoleil S.A."/>
            <person name="Gerber S.A."/>
            <person name="Gygi S.P."/>
        </authorList>
    </citation>
    <scope>PHOSPHORYLATION [LARGE SCALE ANALYSIS] AT SER-367; THR-370 AND SER-371</scope>
    <scope>IDENTIFICATION BY MASS SPECTROMETRY [LARGE SCALE ANALYSIS]</scope>
    <source>
        <tissue>Liver</tissue>
    </source>
</reference>
<reference key="16">
    <citation type="journal article" date="2009" name="Immunity">
        <title>The phagosomal proteome in interferon-gamma-activated macrophages.</title>
        <authorList>
            <person name="Trost M."/>
            <person name="English L."/>
            <person name="Lemieux S."/>
            <person name="Courcelles M."/>
            <person name="Desjardins M."/>
            <person name="Thibault P."/>
        </authorList>
    </citation>
    <scope>PHOSPHORYLATION [LARGE SCALE ANALYSIS] AT SER-329</scope>
    <scope>IDENTIFICATION BY MASS SPECTROMETRY [LARGE SCALE ANALYSIS]</scope>
</reference>
<reference key="17">
    <citation type="journal article" date="2010" name="Cell">
        <title>A tissue-specific atlas of mouse protein phosphorylation and expression.</title>
        <authorList>
            <person name="Huttlin E.L."/>
            <person name="Jedrychowski M.P."/>
            <person name="Elias J.E."/>
            <person name="Goswami T."/>
            <person name="Rad R."/>
            <person name="Beausoleil S.A."/>
            <person name="Villen J."/>
            <person name="Haas W."/>
            <person name="Sowa M.E."/>
            <person name="Gygi S.P."/>
        </authorList>
    </citation>
    <scope>PHOSPHORYLATION [LARGE SCALE ANALYSIS] AT SER-329; SER-367; THR-370 AND SER-371</scope>
    <scope>IDENTIFICATION BY MASS SPECTROMETRY [LARGE SCALE ANALYSIS]</scope>
    <source>
        <tissue>Brain</tissue>
        <tissue>Brown adipose tissue</tissue>
        <tissue>Heart</tissue>
        <tissue>Kidney</tissue>
        <tissue>Liver</tissue>
        <tissue>Lung</tissue>
        <tissue>Pancreas</tissue>
        <tissue>Spleen</tissue>
        <tissue>Testis</tissue>
    </source>
</reference>
<reference key="18">
    <citation type="journal article" date="2018" name="Nat. Commun.">
        <title>Presenilin-mediated cleavage of APP regulates synaptotagmin-7 and presynaptic plasticity.</title>
        <authorList>
            <person name="Barthet G."/>
            <person name="Jorda-Siquier T."/>
            <person name="Rumi-Masante J."/>
            <person name="Bernadou F."/>
            <person name="Mueller U."/>
            <person name="Mulle C."/>
        </authorList>
    </citation>
    <scope>FUNCTION</scope>
</reference>
<organism>
    <name type="scientific">Mus musculus</name>
    <name type="common">Mouse</name>
    <dbReference type="NCBI Taxonomy" id="10090"/>
    <lineage>
        <taxon>Eukaryota</taxon>
        <taxon>Metazoa</taxon>
        <taxon>Chordata</taxon>
        <taxon>Craniata</taxon>
        <taxon>Vertebrata</taxon>
        <taxon>Euteleostomi</taxon>
        <taxon>Mammalia</taxon>
        <taxon>Eutheria</taxon>
        <taxon>Euarchontoglires</taxon>
        <taxon>Glires</taxon>
        <taxon>Rodentia</taxon>
        <taxon>Myomorpha</taxon>
        <taxon>Muroidea</taxon>
        <taxon>Muridae</taxon>
        <taxon>Murinae</taxon>
        <taxon>Mus</taxon>
        <taxon>Mus</taxon>
    </lineage>
</organism>
<comment type="function">
    <text evidence="2 6 8 9 10 11 12 13 14 15">Catalytic subunit of the gamma-secretase complex, an endoprotease complex that catalyzes the intramembrane cleavage of integral membrane proteins such as Notch receptors and APP (amyloid-beta precursor protein). Requires the presence of the other members of the gamma-secretase complex for protease activity (By similarity). Plays a role in Notch and Wnt signaling cascades and regulation of downstream processes via its role in processing key regulatory proteins, and by regulating cytosolic CTNNB1 levels (PubMed:10421573, PubMed:11517342). Stimulates cell-cell adhesion via its interaction with CDH1; this stabilizes the complexes between CDH1 (E-cadherin) and its interaction partners CTNNB1 (beta-catenin), CTNND1 and JUP (gamma-catenin) (PubMed:11226248). Under conditions of apoptosis or calcium influx, cleaves CDH1 (PubMed:11953314). This promotes the disassembly of the complexes between CDH1 and CTNND1, JUP and CTNNB1, increases the pool of cytoplasmic CTNNB1, and thereby negatively regulates Wnt signaling (PubMed:11226248). Required for normal embryonic brain and skeleton development, and for normal angiogenesis (PubMed:10421573, PubMed:12834865, PubMed:9160754). Mediates the proteolytic cleavage of EphB2/CTF1 into EphB2/CTF2 (PubMed:17428795). The holoprotein functions as a calcium-leak channel that allows the passive movement of calcium from endoplasmic reticulum to cytosol and is involved in calcium homeostasis (PubMed:16959576). Involved in the regulation of neurite outgrowth (By similarity). Is a regulator of presynaptic facilitation, spike transmission and synaptic vesicles replenishment in a process that depends on gamma-secretase activity. It acts through the control of SYT7 presynaptic expression (PubMed:30429473).</text>
</comment>
<comment type="subunit">
    <text evidence="2 7 8">Homodimer. The functional gamma-secretase complex is composed of at least four polypeptides: a presenilin homodimer (PSEN1 or PSEN2), nicastrin (NCSTN), APH1 (APH1A or APH1B) and PEN2. Such minimal complex is sufficient for secretase activity. Other components which are associated with the complex include SLC25A64, SLC5A7 and PHB. As part of the gamma-secretase complex, interacts with CRB2 (via transmembrane domain) (By similarity). Predominantly heterodimer of a N-terminal (NTF) and a C-terminal (CTF) endoproteolytical fragment. Associates with proteolytic processed C-terminal fragments C83 and C99 of the amyloid precursor protein (APP). Associates with NOTCH1. Associates with cadherin/catenin adhesion complexes through direct binding to CDH1 or CDH2 (PubMed:11226248). Interaction with CDH1 stabilizes the complex and stimulates cell-cell aggregation. Interaction with CDH2 is essential for trafficking of CDH2 from the endoplasmic reticulum to the plasma membrane. Interacts with CTNND2, CTNNB1, CTNND1, JUP, HERPUD1, FLNA, FLNB, MTCH1, PKP4 and PARL. Interacts through its N-terminus with GFAP (isoform 2) (By similarity). Interacts with DOCK3 (PubMed:10854253). Interacts with UBQLN1 (By similarity).</text>
</comment>
<comment type="interaction">
    <interactant intactId="EBI-990067">
        <id>P49769</id>
    </interactant>
    <interactant intactId="EBI-771149">
        <id>Q9Z1G4</id>
        <label>Atp6v0a1</label>
    </interactant>
    <organismsDiffer>false</organismsDiffer>
    <experiments>2</experiments>
</comment>
<comment type="interaction">
    <interactant intactId="EBI-990067">
        <id>P49769</id>
    </interactant>
    <interactant intactId="EBI-644340">
        <id>P14211</id>
        <label>Calr</label>
    </interactant>
    <organismsDiffer>false</organismsDiffer>
    <experiments>3</experiments>
</comment>
<comment type="interaction">
    <interactant intactId="EBI-990067">
        <id>P49769</id>
    </interactant>
    <interactant intactId="EBI-8107507">
        <id>P52795</id>
        <label>Efnb1</label>
    </interactant>
    <organismsDiffer>false</organismsDiffer>
    <experiments>2</experiments>
</comment>
<comment type="interaction">
    <interactant intactId="EBI-990067">
        <id>P49769</id>
    </interactant>
    <interactant intactId="EBI-400084">
        <id>P35438</id>
        <label>Grin1</label>
    </interactant>
    <organismsDiffer>false</organismsDiffer>
    <experiments>3</experiments>
</comment>
<comment type="interaction">
    <interactant intactId="EBI-990067">
        <id>P49769</id>
    </interactant>
    <interactant intactId="EBI-15566315">
        <id>Q9Z280</id>
        <label>Pld1</label>
    </interactant>
    <organismsDiffer>false</organismsDiffer>
    <experiments>2</experiments>
</comment>
<comment type="interaction">
    <interactant intactId="EBI-990067">
        <id>P49769</id>
    </interactant>
    <interactant intactId="EBI-445340">
        <id>P46096</id>
        <label>Syt1</label>
    </interactant>
    <organismsDiffer>false</organismsDiffer>
    <experiments>6</experiments>
</comment>
<comment type="interaction">
    <interactant intactId="EBI-5260983">
        <id>PRO_0000025597</id>
    </interactant>
    <interactant intactId="EBI-397779">
        <id>Q9WV31</id>
        <label>Arc</label>
    </interactant>
    <organismsDiffer>false</organismsDiffer>
    <experiments>2</experiments>
</comment>
<comment type="subcellular location">
    <subcellularLocation>
        <location evidence="2">Endoplasmic reticulum</location>
    </subcellularLocation>
    <subcellularLocation>
        <location evidence="2">Endoplasmic reticulum membrane</location>
        <topology evidence="2">Multi-pass membrane protein</topology>
    </subcellularLocation>
    <subcellularLocation>
        <location evidence="2">Golgi apparatus membrane</location>
        <topology evidence="2">Multi-pass membrane protein</topology>
    </subcellularLocation>
    <subcellularLocation>
        <location evidence="2">Cytoplasmic granule</location>
    </subcellularLocation>
    <subcellularLocation>
        <location evidence="6 9">Cell membrane</location>
        <topology evidence="2">Multi-pass membrane protein</topology>
    </subcellularLocation>
    <subcellularLocation>
        <location evidence="6 18">Cytoplasmic vesicle</location>
    </subcellularLocation>
    <subcellularLocation>
        <location evidence="2">Cell projection</location>
        <location evidence="2">Growth cone</location>
    </subcellularLocation>
    <subcellularLocation>
        <location evidence="2">Cell projection</location>
        <location evidence="2">Neuron projection</location>
    </subcellularLocation>
    <subcellularLocation>
        <location evidence="2">Early endosome</location>
    </subcellularLocation>
    <subcellularLocation>
        <location evidence="2">Early endosome membrane</location>
        <topology evidence="2">Multi-pass membrane protein</topology>
    </subcellularLocation>
    <subcellularLocation>
        <location evidence="4">Cell projection</location>
        <location evidence="4">Axon</location>
    </subcellularLocation>
    <subcellularLocation>
        <location evidence="4">Synapse</location>
    </subcellularLocation>
    <text evidence="2">Translocates with bound NOTCH1 from the endoplasmic reticulum and/or Golgi to the cell surface. Colocalizes with CDH1/2 at sites of cell-cell contact. Colocalizes with CTNNB1 in the endoplasmic reticulum and the proximity of the plasma membrane. Also present in azurophil granules of neutrophils. Colocalizes with UBQLN1 in the cell membrane and in cytoplasmic juxtanuclear structures called aggresomes.</text>
</comment>
<comment type="alternative products">
    <event type="alternative splicing"/>
    <isoform>
        <id>P49769-1</id>
        <name>1</name>
        <sequence type="displayed"/>
    </isoform>
    <isoform>
        <id>P49769-2</id>
        <name>2</name>
        <sequence type="described" ref="VSP_008381 VSP_008382"/>
    </isoform>
</comment>
<comment type="tissue specificity">
    <text evidence="6 9">Detected in embryonic brain (PubMed:10421573). Detected in adult skin epidermis (at protein level) (PubMed:11517342).</text>
</comment>
<comment type="domain">
    <text evidence="2">The PAL motif is required for normal active site conformation.</text>
</comment>
<comment type="domain">
    <text evidence="2">Substrates, such as NOTCH1 and APP peptides, are bound between PSEN1 transmembrane domains and via the first lumenal loop and the cytoplasmic loop between the sixth and seventh transmembrane domains. Substrate binding causes a conformation change and formation of an intermolecular antiparallel beta-sheet between PSEN1 and its substrates.</text>
</comment>
<comment type="PTM">
    <text evidence="2">Heterogeneous proteolytic processing generates N-terminal (NTF) and C-terminal (CTF) fragments of approximately 35 and 20 kDa, respectively. During apoptosis, the C-terminal fragment (CTF) is further cleaved by caspase-3 to produce the fragment, PS1-CTF12.</text>
</comment>
<comment type="PTM">
    <text evidence="2">After endoproteolysis, the C-terminal fragment (CTF) is phosphorylated on serine residues by PKA and/or PKC. Phosphorylation on Ser-346 inhibits endoproteolysis.</text>
</comment>
<comment type="disruption phenotype">
    <text evidence="6 9 11 15">Perinatal lethality; all of the homozygous mutants die within 30 minutes after birth (PubMed:9160754). Heterozygotes have no visible phenotype (PubMed:9160754). Mutant mice display important skeletal malformations (PubMed:10421573, PubMed:9160754). After 12.5 dpc, they exhibit important defects in embryonic brain development, with a decrease in the number of neural progenitor cells in specific brain regions (PubMed:10421573, PubMed:9160754). The cell density in the marginal zone is normal at 13 dpc, but then becomes much reduced, including a strong reduction in the number of Cajal-Retzius cells (PubMed:10421573). At the same time, Notch1 expression is reduced in the developing brain cortex (PubMed:10421573). At 17.5 dpc, all layers of the ventricular zone in the ventrolateral region at the posterior portion of the lateral ventricles have disappeared, giving rise to symmetric cavitation in the posterior part of the brain (PubMed:9160754). They also display cranial hemorrhages that are first observed at 12.5 dpc (PubMed:10421573, PubMed:12834865, PubMed:9160754). This is due to defects in angiogenesis, with increased blood vessel diameter and abnormal morphology and increased proliferation of capillary endothelial cells that lead to stenosis of the capillary lumen (PubMed:12834865). Psen1-deficient mice can be rescued by neuronal expression of human PSEN1; these mice lack any detectable PSEN1 in their skin and display increased levels of cytosolic and nuclear CTNNB1 in skin, which leads to aberrant Wnt signaling (PubMed:11517342). Mutant mice display epidermal hyperplasia and hyperkeratosis that gives rise to skin tumors (PubMed:11517342).</text>
</comment>
<comment type="miscellaneous">
    <molecule>Isoform 2</molecule>
    <text evidence="17">Due to intron retention.</text>
</comment>
<comment type="similarity">
    <text evidence="17">Belongs to the peptidase A22A family.</text>
</comment>
<keyword id="KW-0025">Alternative splicing</keyword>
<keyword id="KW-0053">Apoptosis</keyword>
<keyword id="KW-0130">Cell adhesion</keyword>
<keyword id="KW-1003">Cell membrane</keyword>
<keyword id="KW-0966">Cell projection</keyword>
<keyword id="KW-0968">Cytoplasmic vesicle</keyword>
<keyword id="KW-0256">Endoplasmic reticulum</keyword>
<keyword id="KW-0967">Endosome</keyword>
<keyword id="KW-0333">Golgi apparatus</keyword>
<keyword id="KW-0378">Hydrolase</keyword>
<keyword id="KW-0472">Membrane</keyword>
<keyword id="KW-0914">Notch signaling pathway</keyword>
<keyword id="KW-0597">Phosphoprotein</keyword>
<keyword id="KW-0645">Protease</keyword>
<keyword id="KW-1185">Reference proteome</keyword>
<keyword id="KW-0770">Synapse</keyword>
<keyword id="KW-0812">Transmembrane</keyword>
<keyword id="KW-1133">Transmembrane helix</keyword>
<proteinExistence type="evidence at protein level"/>
<evidence type="ECO:0000250" key="1"/>
<evidence type="ECO:0000250" key="2">
    <source>
        <dbReference type="UniProtKB" id="P49768"/>
    </source>
</evidence>
<evidence type="ECO:0000250" key="3">
    <source>
        <dbReference type="UniProtKB" id="P97887"/>
    </source>
</evidence>
<evidence type="ECO:0000250" key="4">
    <source>
        <dbReference type="UniProtKB" id="Q4JIM4"/>
    </source>
</evidence>
<evidence type="ECO:0000256" key="5">
    <source>
        <dbReference type="SAM" id="MobiDB-lite"/>
    </source>
</evidence>
<evidence type="ECO:0000269" key="6">
    <source>
    </source>
</evidence>
<evidence type="ECO:0000269" key="7">
    <source>
    </source>
</evidence>
<evidence type="ECO:0000269" key="8">
    <source>
    </source>
</evidence>
<evidence type="ECO:0000269" key="9">
    <source>
    </source>
</evidence>
<evidence type="ECO:0000269" key="10">
    <source>
    </source>
</evidence>
<evidence type="ECO:0000269" key="11">
    <source>
    </source>
</evidence>
<evidence type="ECO:0000269" key="12">
    <source>
    </source>
</evidence>
<evidence type="ECO:0000269" key="13">
    <source>
    </source>
</evidence>
<evidence type="ECO:0000269" key="14">
    <source>
    </source>
</evidence>
<evidence type="ECO:0000269" key="15">
    <source>
    </source>
</evidence>
<evidence type="ECO:0000303" key="16">
    <source>
    </source>
</evidence>
<evidence type="ECO:0000305" key="17"/>
<evidence type="ECO:0000305" key="18">
    <source>
    </source>
</evidence>
<evidence type="ECO:0007744" key="19">
    <source>
    </source>
</evidence>
<evidence type="ECO:0007744" key="20">
    <source>
    </source>
</evidence>
<evidence type="ECO:0007744" key="21">
    <source>
    </source>
</evidence>
<accession>P49769</accession>
<accession>Q91WK6</accession>
<accession>Q9JLP9</accession>
<feature type="chain" id="PRO_0000025597" description="Presenilin-1 NTF subunit" evidence="1">
    <location>
        <begin position="1"/>
        <end position="298"/>
    </location>
</feature>
<feature type="chain" id="PRO_0000025598" description="Presenilin-1 CTF subunit" evidence="1">
    <location>
        <begin position="299"/>
        <end position="467"/>
    </location>
</feature>
<feature type="chain" id="PRO_0000236058" description="Presenilin-1 CTF12" evidence="1">
    <location>
        <begin position="346"/>
        <end position="467"/>
    </location>
</feature>
<feature type="topological domain" description="Cytoplasmic" evidence="2">
    <location>
        <begin position="1"/>
        <end position="82"/>
    </location>
</feature>
<feature type="transmembrane region" description="Helical" evidence="2">
    <location>
        <begin position="83"/>
        <end position="103"/>
    </location>
</feature>
<feature type="topological domain" description="Lumenal" evidence="2">
    <location>
        <begin position="104"/>
        <end position="132"/>
    </location>
</feature>
<feature type="transmembrane region" description="Helical" evidence="2">
    <location>
        <begin position="133"/>
        <end position="153"/>
    </location>
</feature>
<feature type="topological domain" description="Cytoplasmic" evidence="2">
    <location>
        <begin position="154"/>
        <end position="166"/>
    </location>
</feature>
<feature type="transmembrane region" description="Helical" evidence="2">
    <location>
        <begin position="167"/>
        <end position="189"/>
    </location>
</feature>
<feature type="topological domain" description="Lumenal" evidence="2">
    <location>
        <begin position="190"/>
        <end position="194"/>
    </location>
</feature>
<feature type="transmembrane region" description="Helical" evidence="2">
    <location>
        <begin position="195"/>
        <end position="216"/>
    </location>
</feature>
<feature type="topological domain" description="Cytoplasmic" evidence="2">
    <location>
        <begin position="217"/>
        <end position="220"/>
    </location>
</feature>
<feature type="transmembrane region" description="Helical" evidence="2">
    <location>
        <begin position="221"/>
        <end position="241"/>
    </location>
</feature>
<feature type="topological domain" description="Lumenal" evidence="2">
    <location>
        <begin position="242"/>
        <end position="248"/>
    </location>
</feature>
<feature type="transmembrane region" description="Helical" evidence="2">
    <location>
        <begin position="249"/>
        <end position="272"/>
    </location>
</feature>
<feature type="topological domain" description="Cytoplasmic" evidence="2">
    <location>
        <begin position="273"/>
        <end position="380"/>
    </location>
</feature>
<feature type="transmembrane region" description="Helical" evidence="2">
    <location>
        <begin position="381"/>
        <end position="401"/>
    </location>
</feature>
<feature type="topological domain" description="Lumenal" evidence="2">
    <location>
        <begin position="402"/>
        <end position="407"/>
    </location>
</feature>
<feature type="transmembrane region" description="Helical" evidence="2">
    <location>
        <begin position="408"/>
        <end position="428"/>
    </location>
</feature>
<feature type="topological domain" description="Cytoplasmic" evidence="2">
    <location>
        <begin position="429"/>
        <end position="432"/>
    </location>
</feature>
<feature type="transmembrane region" description="Helical" evidence="2">
    <location>
        <begin position="433"/>
        <end position="453"/>
    </location>
</feature>
<feature type="topological domain" description="Lumenal" evidence="2">
    <location>
        <begin position="454"/>
        <end position="467"/>
    </location>
</feature>
<feature type="region of interest" description="Disordered" evidence="5">
    <location>
        <begin position="1"/>
        <end position="68"/>
    </location>
</feature>
<feature type="region of interest" description="Important for cleavage of target proteins" evidence="2">
    <location>
        <begin position="288"/>
        <end position="290"/>
    </location>
</feature>
<feature type="region of interest" description="Disordered" evidence="5">
    <location>
        <begin position="304"/>
        <end position="357"/>
    </location>
</feature>
<feature type="region of interest" description="Required for interaction with CTNNB1" evidence="2">
    <location>
        <begin position="322"/>
        <end position="450"/>
    </location>
</feature>
<feature type="region of interest" description="Required for interaction with CTNND2" evidence="2">
    <location>
        <begin position="372"/>
        <end position="399"/>
    </location>
</feature>
<feature type="region of interest" description="Important for cleavage of target proteins" evidence="2">
    <location>
        <begin position="377"/>
        <end position="381"/>
    </location>
</feature>
<feature type="region of interest" description="Important for cleavage of target proteins" evidence="2">
    <location>
        <begin position="432"/>
        <end position="434"/>
    </location>
</feature>
<feature type="region of interest" description="Interaction with MTCH1" evidence="2">
    <location>
        <begin position="464"/>
        <end position="467"/>
    </location>
</feature>
<feature type="short sequence motif" description="PAL">
    <location>
        <begin position="433"/>
        <end position="435"/>
    </location>
</feature>
<feature type="compositionally biased region" description="Polar residues" evidence="5">
    <location>
        <begin position="10"/>
        <end position="31"/>
    </location>
</feature>
<feature type="compositionally biased region" description="Basic and acidic residues" evidence="5">
    <location>
        <begin position="32"/>
        <end position="46"/>
    </location>
</feature>
<feature type="active site" evidence="2">
    <location>
        <position position="257"/>
    </location>
</feature>
<feature type="active site" evidence="2">
    <location>
        <position position="385"/>
    </location>
</feature>
<feature type="site" description="Cleavage; alternate" evidence="2">
    <location>
        <begin position="291"/>
        <end position="292"/>
    </location>
</feature>
<feature type="site" description="Cleavage; alternate" evidence="2">
    <location>
        <begin position="292"/>
        <end position="293"/>
    </location>
</feature>
<feature type="site" description="Cleavage" evidence="2">
    <location>
        <begin position="298"/>
        <end position="299"/>
    </location>
</feature>
<feature type="site" description="Cleavage; by caspase" evidence="2">
    <location>
        <begin position="345"/>
        <end position="346"/>
    </location>
</feature>
<feature type="modified residue" description="Phosphoserine" evidence="3">
    <location>
        <position position="51"/>
    </location>
</feature>
<feature type="modified residue" description="Phosphoserine" evidence="20 21">
    <location>
        <position position="329"/>
    </location>
</feature>
<feature type="modified residue" description="Phosphoserine; by PKC" evidence="2">
    <location>
        <position position="346"/>
    </location>
</feature>
<feature type="modified residue" description="Phosphoserine" evidence="19 21">
    <location>
        <position position="367"/>
    </location>
</feature>
<feature type="modified residue" description="Phosphothreonine" evidence="19 21">
    <location>
        <position position="370"/>
    </location>
</feature>
<feature type="modified residue" description="Phosphoserine" evidence="19 21">
    <location>
        <position position="371"/>
    </location>
</feature>
<feature type="splice variant" id="VSP_008381" description="In isoform 2." evidence="16">
    <original>DLVAV</original>
    <variation>GKAQD</variation>
    <location>
        <begin position="257"/>
        <end position="261"/>
    </location>
</feature>
<feature type="splice variant" id="VSP_008382" description="In isoform 2." evidence="16">
    <location>
        <begin position="262"/>
        <end position="467"/>
    </location>
</feature>
<feature type="sequence variant" description="In strain: SAM P8.">
    <original>S</original>
    <variation>T</variation>
    <location>
        <position position="9"/>
    </location>
</feature>
<feature type="sequence variant" description="In strain: SAM P8.">
    <original>D</original>
    <variation>E</variation>
    <location>
        <position position="40"/>
    </location>
</feature>
<feature type="sequence variant" description="In strain: SAM P8.">
    <original>E</original>
    <variation>CM</variation>
    <location>
        <position position="67"/>
    </location>
</feature>
<feature type="sequence variant" description="In strain: SAM P8.">
    <original>V</original>
    <variation>L</variation>
    <location>
        <position position="196"/>
    </location>
</feature>
<feature type="sequence variant" description="In strain: SAM P8.">
    <original>ER</original>
    <variation>RRD</variation>
    <location>
        <begin position="321"/>
        <end position="322"/>
    </location>
</feature>
<sequence>MTEIPAPLSYFQNAQMSEDSHSSSAIRSQNDSQERQQQHDRQRLDNPEPISNGRPQSNSRQVVEQDEEEDEELTLKYGAKHVIMLFVPVTLCMVVVVATIKSVSFYTRKDGQLIYTPFTEDTETVGQRALHSILNAAIMISVIVIMTILLVVLYKYRCYKVIHAWLIISSLLLLFFFSFIYLGEVFKTYNVAVDYVTVALLIWNFGVVGMIAIHWKGPLRLQQAYLIMISALMALVFIKYLPEWTAWLILAVISVYDLVAVLCPKGPLRMLVETAQERNETLFPALIYSSTMVWLVNMAEGDPEAQRRVPKNPKYNTQRAERETQDSGSGNDDGGFSEEWEAQRDSHLGPHRSTPESRAAVQELSGSILTSEDPEERGVKLGLGDFIFYSVLVGKASATASGDWNTTIACFVAILIGLCLTLLLLAIFKKALPALPISITFGLVFYFATDYLVQPFMDQLAFHQFYI</sequence>
<name>PSN1_MOUSE</name>